<organism>
    <name type="scientific">Anaeromyxobacter dehalogenans (strain 2CP-1 / ATCC BAA-258)</name>
    <dbReference type="NCBI Taxonomy" id="455488"/>
    <lineage>
        <taxon>Bacteria</taxon>
        <taxon>Pseudomonadati</taxon>
        <taxon>Myxococcota</taxon>
        <taxon>Myxococcia</taxon>
        <taxon>Myxococcales</taxon>
        <taxon>Cystobacterineae</taxon>
        <taxon>Anaeromyxobacteraceae</taxon>
        <taxon>Anaeromyxobacter</taxon>
    </lineage>
</organism>
<proteinExistence type="inferred from homology"/>
<protein>
    <recommendedName>
        <fullName evidence="1">Arginine repressor</fullName>
    </recommendedName>
</protein>
<reference key="1">
    <citation type="submission" date="2009-01" db="EMBL/GenBank/DDBJ databases">
        <title>Complete sequence of Anaeromyxobacter dehalogenans 2CP-1.</title>
        <authorList>
            <person name="Lucas S."/>
            <person name="Copeland A."/>
            <person name="Lapidus A."/>
            <person name="Glavina del Rio T."/>
            <person name="Dalin E."/>
            <person name="Tice H."/>
            <person name="Bruce D."/>
            <person name="Goodwin L."/>
            <person name="Pitluck S."/>
            <person name="Saunders E."/>
            <person name="Brettin T."/>
            <person name="Detter J.C."/>
            <person name="Han C."/>
            <person name="Larimer F."/>
            <person name="Land M."/>
            <person name="Hauser L."/>
            <person name="Kyrpides N."/>
            <person name="Ovchinnikova G."/>
            <person name="Beliaev A.S."/>
            <person name="Richardson P."/>
        </authorList>
    </citation>
    <scope>NUCLEOTIDE SEQUENCE [LARGE SCALE GENOMIC DNA]</scope>
    <source>
        <strain>2CP-1 / ATCC BAA-258</strain>
    </source>
</reference>
<dbReference type="EMBL" id="CP001359">
    <property type="protein sequence ID" value="ACL63970.1"/>
    <property type="molecule type" value="Genomic_DNA"/>
</dbReference>
<dbReference type="RefSeq" id="WP_012632016.1">
    <property type="nucleotide sequence ID" value="NC_011891.1"/>
</dbReference>
<dbReference type="SMR" id="B8JC48"/>
<dbReference type="KEGG" id="acp:A2cp1_0613"/>
<dbReference type="HOGENOM" id="CLU_097103_1_1_7"/>
<dbReference type="UniPathway" id="UPA00068"/>
<dbReference type="Proteomes" id="UP000007089">
    <property type="component" value="Chromosome"/>
</dbReference>
<dbReference type="GO" id="GO:0005737">
    <property type="term" value="C:cytoplasm"/>
    <property type="evidence" value="ECO:0007669"/>
    <property type="project" value="UniProtKB-SubCell"/>
</dbReference>
<dbReference type="GO" id="GO:0034618">
    <property type="term" value="F:arginine binding"/>
    <property type="evidence" value="ECO:0007669"/>
    <property type="project" value="InterPro"/>
</dbReference>
<dbReference type="GO" id="GO:0003677">
    <property type="term" value="F:DNA binding"/>
    <property type="evidence" value="ECO:0007669"/>
    <property type="project" value="UniProtKB-KW"/>
</dbReference>
<dbReference type="GO" id="GO:0003700">
    <property type="term" value="F:DNA-binding transcription factor activity"/>
    <property type="evidence" value="ECO:0007669"/>
    <property type="project" value="UniProtKB-UniRule"/>
</dbReference>
<dbReference type="GO" id="GO:0006526">
    <property type="term" value="P:L-arginine biosynthetic process"/>
    <property type="evidence" value="ECO:0007669"/>
    <property type="project" value="UniProtKB-UniPathway"/>
</dbReference>
<dbReference type="GO" id="GO:0051259">
    <property type="term" value="P:protein complex oligomerization"/>
    <property type="evidence" value="ECO:0007669"/>
    <property type="project" value="InterPro"/>
</dbReference>
<dbReference type="GO" id="GO:1900079">
    <property type="term" value="P:regulation of arginine biosynthetic process"/>
    <property type="evidence" value="ECO:0007669"/>
    <property type="project" value="UniProtKB-UniRule"/>
</dbReference>
<dbReference type="Gene3D" id="3.30.1360.40">
    <property type="match status" value="1"/>
</dbReference>
<dbReference type="Gene3D" id="1.10.10.10">
    <property type="entry name" value="Winged helix-like DNA-binding domain superfamily/Winged helix DNA-binding domain"/>
    <property type="match status" value="1"/>
</dbReference>
<dbReference type="HAMAP" id="MF_00173">
    <property type="entry name" value="Arg_repressor"/>
    <property type="match status" value="1"/>
</dbReference>
<dbReference type="InterPro" id="IPR001669">
    <property type="entry name" value="Arg_repress"/>
</dbReference>
<dbReference type="InterPro" id="IPR020899">
    <property type="entry name" value="Arg_repress_C"/>
</dbReference>
<dbReference type="InterPro" id="IPR036251">
    <property type="entry name" value="Arg_repress_C_sf"/>
</dbReference>
<dbReference type="InterPro" id="IPR020900">
    <property type="entry name" value="Arg_repress_DNA-bd"/>
</dbReference>
<dbReference type="InterPro" id="IPR036388">
    <property type="entry name" value="WH-like_DNA-bd_sf"/>
</dbReference>
<dbReference type="InterPro" id="IPR036390">
    <property type="entry name" value="WH_DNA-bd_sf"/>
</dbReference>
<dbReference type="PANTHER" id="PTHR34471">
    <property type="entry name" value="ARGININE REPRESSOR"/>
    <property type="match status" value="1"/>
</dbReference>
<dbReference type="PANTHER" id="PTHR34471:SF1">
    <property type="entry name" value="ARGININE REPRESSOR"/>
    <property type="match status" value="1"/>
</dbReference>
<dbReference type="Pfam" id="PF01316">
    <property type="entry name" value="Arg_repressor"/>
    <property type="match status" value="1"/>
</dbReference>
<dbReference type="Pfam" id="PF02863">
    <property type="entry name" value="Arg_repressor_C"/>
    <property type="match status" value="1"/>
</dbReference>
<dbReference type="PRINTS" id="PR01467">
    <property type="entry name" value="ARGREPRESSOR"/>
</dbReference>
<dbReference type="SUPFAM" id="SSF55252">
    <property type="entry name" value="C-terminal domain of arginine repressor"/>
    <property type="match status" value="1"/>
</dbReference>
<dbReference type="SUPFAM" id="SSF46785">
    <property type="entry name" value="Winged helix' DNA-binding domain"/>
    <property type="match status" value="1"/>
</dbReference>
<feature type="chain" id="PRO_1000123781" description="Arginine repressor">
    <location>
        <begin position="1"/>
        <end position="160"/>
    </location>
</feature>
<keyword id="KW-0028">Amino-acid biosynthesis</keyword>
<keyword id="KW-0055">Arginine biosynthesis</keyword>
<keyword id="KW-0963">Cytoplasm</keyword>
<keyword id="KW-0238">DNA-binding</keyword>
<keyword id="KW-0678">Repressor</keyword>
<keyword id="KW-0804">Transcription</keyword>
<keyword id="KW-0805">Transcription regulation</keyword>
<comment type="function">
    <text evidence="1">Regulates arginine biosynthesis genes.</text>
</comment>
<comment type="pathway">
    <text>Amino-acid biosynthesis; L-arginine biosynthesis [regulation].</text>
</comment>
<comment type="subcellular location">
    <subcellularLocation>
        <location evidence="1">Cytoplasm</location>
    </subcellularLocation>
</comment>
<comment type="similarity">
    <text evidence="1">Belongs to the ArgR family.</text>
</comment>
<sequence>MTSADRRRDAVARIIRARRIGTQEELLAALERAGFRATQATLSRDLARLGARRVSGPEGAVYELGADGADGGLAALRGLVSSIAANASMVVIRTHPGSAPAIARAIDLAQPPEVLGTIAGDDTIFVAPAGELRPRRLAARLAELLGTPSALAGEGGERTH</sequence>
<gene>
    <name evidence="1" type="primary">argR</name>
    <name type="ordered locus">A2cp1_0613</name>
</gene>
<evidence type="ECO:0000255" key="1">
    <source>
        <dbReference type="HAMAP-Rule" id="MF_00173"/>
    </source>
</evidence>
<accession>B8JC48</accession>
<name>ARGR_ANAD2</name>